<reference key="1">
    <citation type="journal article" date="2004" name="Nat. Biotechnol.">
        <title>Complete genome sequence of the metabolically versatile photosynthetic bacterium Rhodopseudomonas palustris.</title>
        <authorList>
            <person name="Larimer F.W."/>
            <person name="Chain P."/>
            <person name="Hauser L."/>
            <person name="Lamerdin J.E."/>
            <person name="Malfatti S."/>
            <person name="Do L."/>
            <person name="Land M.L."/>
            <person name="Pelletier D.A."/>
            <person name="Beatty J.T."/>
            <person name="Lang A.S."/>
            <person name="Tabita F.R."/>
            <person name="Gibson J.L."/>
            <person name="Hanson T.E."/>
            <person name="Bobst C."/>
            <person name="Torres y Torres J.L."/>
            <person name="Peres C."/>
            <person name="Harrison F.H."/>
            <person name="Gibson J."/>
            <person name="Harwood C.S."/>
        </authorList>
    </citation>
    <scope>NUCLEOTIDE SEQUENCE [LARGE SCALE GENOMIC DNA]</scope>
    <source>
        <strain>ATCC BAA-98 / CGA009</strain>
    </source>
</reference>
<keyword id="KW-0963">Cytoplasm</keyword>
<keyword id="KW-0274">FAD</keyword>
<keyword id="KW-0285">Flavoprotein</keyword>
<keyword id="KW-0520">NAD</keyword>
<keyword id="KW-0819">tRNA processing</keyword>
<gene>
    <name evidence="1" type="primary">mnmG</name>
    <name evidence="1" type="synonym">gidA</name>
    <name type="ordered locus">RPA0294</name>
</gene>
<evidence type="ECO:0000255" key="1">
    <source>
        <dbReference type="HAMAP-Rule" id="MF_00129"/>
    </source>
</evidence>
<evidence type="ECO:0000305" key="2"/>
<dbReference type="EMBL" id="BX572593">
    <property type="protein sequence ID" value="CAE25738.1"/>
    <property type="status" value="ALT_INIT"/>
    <property type="molecule type" value="Genomic_DNA"/>
</dbReference>
<dbReference type="RefSeq" id="WP_042440689.1">
    <property type="nucleotide sequence ID" value="NZ_CP116810.1"/>
</dbReference>
<dbReference type="SMR" id="Q6ND15"/>
<dbReference type="STRING" id="258594.RPA0294"/>
<dbReference type="GeneID" id="66891304"/>
<dbReference type="eggNOG" id="COG0445">
    <property type="taxonomic scope" value="Bacteria"/>
</dbReference>
<dbReference type="HOGENOM" id="CLU_007831_2_2_5"/>
<dbReference type="PhylomeDB" id="Q6ND15"/>
<dbReference type="GO" id="GO:0005829">
    <property type="term" value="C:cytosol"/>
    <property type="evidence" value="ECO:0007669"/>
    <property type="project" value="TreeGrafter"/>
</dbReference>
<dbReference type="GO" id="GO:0050660">
    <property type="term" value="F:flavin adenine dinucleotide binding"/>
    <property type="evidence" value="ECO:0007669"/>
    <property type="project" value="UniProtKB-UniRule"/>
</dbReference>
<dbReference type="GO" id="GO:0030488">
    <property type="term" value="P:tRNA methylation"/>
    <property type="evidence" value="ECO:0007669"/>
    <property type="project" value="TreeGrafter"/>
</dbReference>
<dbReference type="GO" id="GO:0002098">
    <property type="term" value="P:tRNA wobble uridine modification"/>
    <property type="evidence" value="ECO:0007669"/>
    <property type="project" value="InterPro"/>
</dbReference>
<dbReference type="FunFam" id="3.50.50.60:FF:000145">
    <property type="entry name" value="tRNA uridine 5-carboxymethylaminomethyl modification enzyme"/>
    <property type="match status" value="1"/>
</dbReference>
<dbReference type="FunFam" id="1.10.150.570:FF:000001">
    <property type="entry name" value="tRNA uridine 5-carboxymethylaminomethyl modification enzyme MnmG"/>
    <property type="match status" value="1"/>
</dbReference>
<dbReference type="FunFam" id="3.50.50.60:FF:000002">
    <property type="entry name" value="tRNA uridine 5-carboxymethylaminomethyl modification enzyme MnmG"/>
    <property type="match status" value="1"/>
</dbReference>
<dbReference type="Gene3D" id="3.50.50.60">
    <property type="entry name" value="FAD/NAD(P)-binding domain"/>
    <property type="match status" value="2"/>
</dbReference>
<dbReference type="Gene3D" id="1.10.150.570">
    <property type="entry name" value="GidA associated domain, C-terminal subdomain"/>
    <property type="match status" value="1"/>
</dbReference>
<dbReference type="Gene3D" id="1.10.10.1800">
    <property type="entry name" value="tRNA uridine 5-carboxymethylaminomethyl modification enzyme MnmG/GidA"/>
    <property type="match status" value="1"/>
</dbReference>
<dbReference type="HAMAP" id="MF_00129">
    <property type="entry name" value="MnmG_GidA"/>
    <property type="match status" value="1"/>
</dbReference>
<dbReference type="InterPro" id="IPR036188">
    <property type="entry name" value="FAD/NAD-bd_sf"/>
</dbReference>
<dbReference type="InterPro" id="IPR049312">
    <property type="entry name" value="GIDA_C_N"/>
</dbReference>
<dbReference type="InterPro" id="IPR004416">
    <property type="entry name" value="MnmG"/>
</dbReference>
<dbReference type="InterPro" id="IPR002218">
    <property type="entry name" value="MnmG-rel"/>
</dbReference>
<dbReference type="InterPro" id="IPR020595">
    <property type="entry name" value="MnmG-rel_CS"/>
</dbReference>
<dbReference type="InterPro" id="IPR026904">
    <property type="entry name" value="MnmG_C"/>
</dbReference>
<dbReference type="InterPro" id="IPR047001">
    <property type="entry name" value="MnmG_C_subdom"/>
</dbReference>
<dbReference type="InterPro" id="IPR044920">
    <property type="entry name" value="MnmG_C_subdom_sf"/>
</dbReference>
<dbReference type="InterPro" id="IPR040131">
    <property type="entry name" value="MnmG_N"/>
</dbReference>
<dbReference type="NCBIfam" id="TIGR00136">
    <property type="entry name" value="mnmG_gidA"/>
    <property type="match status" value="1"/>
</dbReference>
<dbReference type="PANTHER" id="PTHR11806">
    <property type="entry name" value="GLUCOSE INHIBITED DIVISION PROTEIN A"/>
    <property type="match status" value="1"/>
</dbReference>
<dbReference type="PANTHER" id="PTHR11806:SF0">
    <property type="entry name" value="PROTEIN MTO1 HOMOLOG, MITOCHONDRIAL"/>
    <property type="match status" value="1"/>
</dbReference>
<dbReference type="Pfam" id="PF01134">
    <property type="entry name" value="GIDA"/>
    <property type="match status" value="1"/>
</dbReference>
<dbReference type="Pfam" id="PF21680">
    <property type="entry name" value="GIDA_C_1st"/>
    <property type="match status" value="1"/>
</dbReference>
<dbReference type="Pfam" id="PF13932">
    <property type="entry name" value="SAM_GIDA_C"/>
    <property type="match status" value="1"/>
</dbReference>
<dbReference type="PRINTS" id="PR00411">
    <property type="entry name" value="PNDRDTASEI"/>
</dbReference>
<dbReference type="SMART" id="SM01228">
    <property type="entry name" value="GIDA_assoc_3"/>
    <property type="match status" value="1"/>
</dbReference>
<dbReference type="SUPFAM" id="SSF51905">
    <property type="entry name" value="FAD/NAD(P)-binding domain"/>
    <property type="match status" value="1"/>
</dbReference>
<dbReference type="PROSITE" id="PS01280">
    <property type="entry name" value="GIDA_1"/>
    <property type="match status" value="1"/>
</dbReference>
<dbReference type="PROSITE" id="PS01281">
    <property type="entry name" value="GIDA_2"/>
    <property type="match status" value="1"/>
</dbReference>
<organism>
    <name type="scientific">Rhodopseudomonas palustris (strain ATCC BAA-98 / CGA009)</name>
    <dbReference type="NCBI Taxonomy" id="258594"/>
    <lineage>
        <taxon>Bacteria</taxon>
        <taxon>Pseudomonadati</taxon>
        <taxon>Pseudomonadota</taxon>
        <taxon>Alphaproteobacteria</taxon>
        <taxon>Hyphomicrobiales</taxon>
        <taxon>Nitrobacteraceae</taxon>
        <taxon>Rhodopseudomonas</taxon>
    </lineage>
</organism>
<comment type="function">
    <text evidence="1">NAD-binding protein involved in the addition of a carboxymethylaminomethyl (cmnm) group at the wobble position (U34) of certain tRNAs, forming tRNA-cmnm(5)s(2)U34.</text>
</comment>
<comment type="cofactor">
    <cofactor evidence="1">
        <name>FAD</name>
        <dbReference type="ChEBI" id="CHEBI:57692"/>
    </cofactor>
</comment>
<comment type="subunit">
    <text evidence="1">Homodimer. Heterotetramer of two MnmE and two MnmG subunits.</text>
</comment>
<comment type="subcellular location">
    <subcellularLocation>
        <location evidence="1">Cytoplasm</location>
    </subcellularLocation>
</comment>
<comment type="similarity">
    <text evidence="1">Belongs to the MnmG family.</text>
</comment>
<comment type="sequence caution" evidence="2">
    <conflict type="erroneous initiation">
        <sequence resource="EMBL-CDS" id="CAE25738"/>
    </conflict>
</comment>
<sequence>MRTSFDVIVIGGGHAGCEAAAAAARIGAATALVTHRFATVGAMSCNPAIGGLGKGHLVREVDALDGLMGRVADAGGIQFRMLNRRKGPAVRGPRAQADRKLYAAAMQTAIQGFPNLSVIEGEADALLWQDGRVSGIRLGDGREFAAAAVVITTGTFLRGLIHLGERSWPAGRIDEAPAMGLSSSFEALGFKLGRLKTGTPPRLDGRTIDWSAVEMQPGDDPAEPFSVLTPAITTPQIECGITRTTTATHEVIRANVHRSPMYSGQIQSTGPRYCPSIEDKIVKFGDRDGHQIFLEPEGLDDPTVYPNGISTSLPEEVQRAILKTIPGLERTEMLRPGYAIEYDHVDPRELEPTLQTKRLRGLFLAGQINGTTGYEEAAAQGLVAGLNAGLSAGGGDLVVFDRADGYLGVMIDDLVTRGITEPYRMFTSRAEYRLTLRADNADQRLTDKGLALGCVGVERSAFHHDKMSALSDAKALAQSLSITPNEAAKHGLALNRDGQRRSAFDLLSYPEIEWAQVRAIWPELGKVDPAIAVHVEIDAKYHVYLERQTADVEAFRRDESLGLTDVDYAAVPGLSNEARTRLERHRPHTVGQAGRLDGITPAALGILAAYLRREQRKRKSTG</sequence>
<name>MNMG_RHOPA</name>
<protein>
    <recommendedName>
        <fullName evidence="1">tRNA uridine 5-carboxymethylaminomethyl modification enzyme MnmG</fullName>
    </recommendedName>
    <alternativeName>
        <fullName evidence="1">Glucose-inhibited division protein A</fullName>
    </alternativeName>
</protein>
<feature type="chain" id="PRO_0000117163" description="tRNA uridine 5-carboxymethylaminomethyl modification enzyme MnmG">
    <location>
        <begin position="1"/>
        <end position="622"/>
    </location>
</feature>
<feature type="binding site" evidence="1">
    <location>
        <begin position="11"/>
        <end position="16"/>
    </location>
    <ligand>
        <name>FAD</name>
        <dbReference type="ChEBI" id="CHEBI:57692"/>
    </ligand>
</feature>
<feature type="binding site" evidence="1">
    <location>
        <begin position="270"/>
        <end position="284"/>
    </location>
    <ligand>
        <name>NAD(+)</name>
        <dbReference type="ChEBI" id="CHEBI:57540"/>
    </ligand>
</feature>
<accession>Q6ND15</accession>
<proteinExistence type="inferred from homology"/>